<organism>
    <name type="scientific">Synechococcus elongatus (strain ATCC 33912 / PCC 7942 / FACHB-805)</name>
    <name type="common">Anacystis nidulans R2</name>
    <dbReference type="NCBI Taxonomy" id="1140"/>
    <lineage>
        <taxon>Bacteria</taxon>
        <taxon>Bacillati</taxon>
        <taxon>Cyanobacteriota</taxon>
        <taxon>Cyanophyceae</taxon>
        <taxon>Synechococcales</taxon>
        <taxon>Synechococcaceae</taxon>
        <taxon>Synechococcus</taxon>
    </lineage>
</organism>
<comment type="function">
    <text evidence="1">Acts as a chaperone.</text>
</comment>
<comment type="similarity">
    <text evidence="3">Belongs to the heat shock protein 70 family.</text>
</comment>
<proteinExistence type="inferred from homology"/>
<accession>P50022</accession>
<accession>Q31K09</accession>
<dbReference type="EMBL" id="D29968">
    <property type="protein sequence ID" value="BAA06234.1"/>
    <property type="molecule type" value="Genomic_DNA"/>
</dbReference>
<dbReference type="EMBL" id="CP000100">
    <property type="protein sequence ID" value="ABB58610.1"/>
    <property type="molecule type" value="Genomic_DNA"/>
</dbReference>
<dbReference type="PIR" id="JC2458">
    <property type="entry name" value="JC2458"/>
</dbReference>
<dbReference type="SMR" id="P50022"/>
<dbReference type="STRING" id="1140.Synpcc7942_2580"/>
<dbReference type="PaxDb" id="1140-Synpcc7942_2580"/>
<dbReference type="KEGG" id="syf:Synpcc7942_2580"/>
<dbReference type="eggNOG" id="COG0443">
    <property type="taxonomic scope" value="Bacteria"/>
</dbReference>
<dbReference type="HOGENOM" id="CLU_005965_2_1_3"/>
<dbReference type="OrthoDB" id="9766019at2"/>
<dbReference type="BioCyc" id="SYNEL:SYNPCC7942_2580-MONOMER"/>
<dbReference type="Proteomes" id="UP000889800">
    <property type="component" value="Chromosome"/>
</dbReference>
<dbReference type="GO" id="GO:0005524">
    <property type="term" value="F:ATP binding"/>
    <property type="evidence" value="ECO:0007669"/>
    <property type="project" value="UniProtKB-UniRule"/>
</dbReference>
<dbReference type="GO" id="GO:0140662">
    <property type="term" value="F:ATP-dependent protein folding chaperone"/>
    <property type="evidence" value="ECO:0007669"/>
    <property type="project" value="InterPro"/>
</dbReference>
<dbReference type="GO" id="GO:0051082">
    <property type="term" value="F:unfolded protein binding"/>
    <property type="evidence" value="ECO:0007669"/>
    <property type="project" value="InterPro"/>
</dbReference>
<dbReference type="CDD" id="cd10234">
    <property type="entry name" value="ASKHA_NBD_HSP70_DnaK-like"/>
    <property type="match status" value="1"/>
</dbReference>
<dbReference type="FunFam" id="2.60.34.10:FF:000014">
    <property type="entry name" value="Chaperone protein DnaK HSP70"/>
    <property type="match status" value="1"/>
</dbReference>
<dbReference type="FunFam" id="3.30.420.40:FF:000004">
    <property type="entry name" value="Molecular chaperone DnaK"/>
    <property type="match status" value="1"/>
</dbReference>
<dbReference type="FunFam" id="3.90.640.10:FF:000003">
    <property type="entry name" value="Molecular chaperone DnaK"/>
    <property type="match status" value="1"/>
</dbReference>
<dbReference type="Gene3D" id="3.30.420.40">
    <property type="match status" value="2"/>
</dbReference>
<dbReference type="Gene3D" id="3.90.640.10">
    <property type="entry name" value="Actin, Chain A, domain 4"/>
    <property type="match status" value="1"/>
</dbReference>
<dbReference type="Gene3D" id="2.60.34.10">
    <property type="entry name" value="Substrate Binding Domain Of DNAk, Chain A, domain 1"/>
    <property type="match status" value="1"/>
</dbReference>
<dbReference type="HAMAP" id="MF_00332">
    <property type="entry name" value="DnaK"/>
    <property type="match status" value="1"/>
</dbReference>
<dbReference type="InterPro" id="IPR043129">
    <property type="entry name" value="ATPase_NBD"/>
</dbReference>
<dbReference type="InterPro" id="IPR012725">
    <property type="entry name" value="Chaperone_DnaK"/>
</dbReference>
<dbReference type="InterPro" id="IPR018181">
    <property type="entry name" value="Heat_shock_70_CS"/>
</dbReference>
<dbReference type="InterPro" id="IPR029047">
    <property type="entry name" value="HSP70_peptide-bd_sf"/>
</dbReference>
<dbReference type="InterPro" id="IPR013126">
    <property type="entry name" value="Hsp_70_fam"/>
</dbReference>
<dbReference type="NCBIfam" id="NF001413">
    <property type="entry name" value="PRK00290.1"/>
    <property type="match status" value="1"/>
</dbReference>
<dbReference type="NCBIfam" id="NF009946">
    <property type="entry name" value="PRK13410.1"/>
    <property type="match status" value="1"/>
</dbReference>
<dbReference type="NCBIfam" id="TIGR02350">
    <property type="entry name" value="prok_dnaK"/>
    <property type="match status" value="1"/>
</dbReference>
<dbReference type="PANTHER" id="PTHR19375">
    <property type="entry name" value="HEAT SHOCK PROTEIN 70KDA"/>
    <property type="match status" value="1"/>
</dbReference>
<dbReference type="Pfam" id="PF00012">
    <property type="entry name" value="HSP70"/>
    <property type="match status" value="1"/>
</dbReference>
<dbReference type="PRINTS" id="PR00301">
    <property type="entry name" value="HEATSHOCK70"/>
</dbReference>
<dbReference type="SUPFAM" id="SSF53067">
    <property type="entry name" value="Actin-like ATPase domain"/>
    <property type="match status" value="2"/>
</dbReference>
<dbReference type="SUPFAM" id="SSF100920">
    <property type="entry name" value="Heat shock protein 70kD (HSP70), peptide-binding domain"/>
    <property type="match status" value="1"/>
</dbReference>
<dbReference type="PROSITE" id="PS00297">
    <property type="entry name" value="HSP70_1"/>
    <property type="match status" value="1"/>
</dbReference>
<dbReference type="PROSITE" id="PS00329">
    <property type="entry name" value="HSP70_2"/>
    <property type="match status" value="1"/>
</dbReference>
<dbReference type="PROSITE" id="PS01036">
    <property type="entry name" value="HSP70_3"/>
    <property type="match status" value="1"/>
</dbReference>
<keyword id="KW-0067">ATP-binding</keyword>
<keyword id="KW-0143">Chaperone</keyword>
<keyword id="KW-0547">Nucleotide-binding</keyword>
<keyword id="KW-0597">Phosphoprotein</keyword>
<keyword id="KW-1185">Reference proteome</keyword>
<keyword id="KW-0346">Stress response</keyword>
<sequence>MGRVVGIDLGTTNSVIAVMEGGKPMVIANAEGVRTTPSVVGVSKTGERLVGELARRQLVLNPRNTFANIKRFIGRRYDELTDESKRVPYTVRRDPEGNVRIVCPQLSREFAPEEVAAMILRKLAEEASRYLGEPVTGAVITVPAYFNDSQRQATRDAGRIAGLEVKRILNEPTAASLAYGLDRRDNQTILVFDLGGGTFDVSVLKVGNGVFEVKATSGDTQLGGNDFDRRIVDWLAEQFLEAEGIDLRRDRQALQRLIEAAEKAKIELSGVSVTDINLPFITATEDEPKHLETRLTRSEFEALCEDLLERMMRPLRRALKDARLQPQDIDEVVLVGGSTRMPMVQQLVRSLIGREPNQNVNPDEVVAIGAAIQAGILAGEVKDILLLDVTPLSLGLETIGGVMKKLIPRNTAIPVRRSDIFSTAENNQTMVEIHILQGERQLAEGNKSLGRFKLTGIPPAPRGVPQVQVSFDIDANGILQVSALDKTTGREQTVTIQGASTLSQEEVKRMMKDAELYAQQDRQLKARIEKRNRAQTLIAQSERRLREISLDFGLYFAESKRRRIESTIRELKDYLERQDDRGLDLALAELQDALFDLNQETAARLRDEEGEGFFEPLKQTFASLRGDGNRDFERSWDDRGGDRWDADPWDRSRRSTPSYGYDDRRSPVSDPYRGERWVEEQTSMSRREPVRDRNGGNGSVRPEPAPRRGRPTWEEDQPPRRDRSSQPPAKPASGRRWNDGWDDDDDEWF</sequence>
<evidence type="ECO:0000250" key="1"/>
<evidence type="ECO:0000256" key="2">
    <source>
        <dbReference type="SAM" id="MobiDB-lite"/>
    </source>
</evidence>
<evidence type="ECO:0000305" key="3"/>
<reference key="1">
    <citation type="journal article" date="1994" name="Biochem. Biophys. Res. Commun.">
        <title>Sequence analysis of the third dnaK homolog gene in Synechococcus sp. PCC7942.</title>
        <authorList>
            <person name="Nimura K."/>
            <person name="Yoshikawa H."/>
            <person name="Takahashi H."/>
        </authorList>
    </citation>
    <scope>NUCLEOTIDE SEQUENCE [GENOMIC DNA]</scope>
</reference>
<reference key="2">
    <citation type="journal article" date="1994" name="Biochem. Biophys. Res. Commun.">
        <authorList>
            <person name="Nimura K."/>
            <person name="Yoshikawa H."/>
            <person name="Takahashi H."/>
        </authorList>
    </citation>
    <scope>ERRATUM OF PUBMED:8003021</scope>
</reference>
<reference key="3">
    <citation type="submission" date="2005-08" db="EMBL/GenBank/DDBJ databases">
        <title>Complete sequence of chromosome 1 of Synechococcus elongatus PCC 7942.</title>
        <authorList>
            <consortium name="US DOE Joint Genome Institute"/>
            <person name="Copeland A."/>
            <person name="Lucas S."/>
            <person name="Lapidus A."/>
            <person name="Barry K."/>
            <person name="Detter J.C."/>
            <person name="Glavina T."/>
            <person name="Hammon N."/>
            <person name="Israni S."/>
            <person name="Pitluck S."/>
            <person name="Schmutz J."/>
            <person name="Larimer F."/>
            <person name="Land M."/>
            <person name="Kyrpides N."/>
            <person name="Lykidis A."/>
            <person name="Golden S."/>
            <person name="Richardson P."/>
        </authorList>
    </citation>
    <scope>NUCLEOTIDE SEQUENCE [LARGE SCALE GENOMIC DNA]</scope>
    <source>
        <strain>ATCC 33912 / PCC 7942 / FACHB-805</strain>
    </source>
</reference>
<protein>
    <recommendedName>
        <fullName>Chaperone protein dnaK3</fullName>
    </recommendedName>
    <alternativeName>
        <fullName>HSP70-3</fullName>
    </alternativeName>
    <alternativeName>
        <fullName>Heat shock 70 kDa protein 3</fullName>
    </alternativeName>
    <alternativeName>
        <fullName>Heat shock protein 70-3</fullName>
    </alternativeName>
</protein>
<feature type="chain" id="PRO_0000078565" description="Chaperone protein dnaK3">
    <location>
        <begin position="1"/>
        <end position="749"/>
    </location>
</feature>
<feature type="region of interest" description="Disordered" evidence="2">
    <location>
        <begin position="643"/>
        <end position="749"/>
    </location>
</feature>
<feature type="compositionally biased region" description="Basic and acidic residues" evidence="2">
    <location>
        <begin position="643"/>
        <end position="653"/>
    </location>
</feature>
<feature type="compositionally biased region" description="Basic and acidic residues" evidence="2">
    <location>
        <begin position="661"/>
        <end position="694"/>
    </location>
</feature>
<feature type="compositionally biased region" description="Basic and acidic residues" evidence="2">
    <location>
        <begin position="711"/>
        <end position="724"/>
    </location>
</feature>
<feature type="compositionally biased region" description="Acidic residues" evidence="2">
    <location>
        <begin position="740"/>
        <end position="749"/>
    </location>
</feature>
<feature type="modified residue" description="Phosphothreonine; by autocatalysis" evidence="1">
    <location>
        <position position="198"/>
    </location>
</feature>
<name>DNAK3_SYNE7</name>
<gene>
    <name type="primary">dnaK3</name>
    <name type="ordered locus">Synpcc7942_2580</name>
</gene>